<protein>
    <recommendedName>
        <fullName evidence="1">Eukaryotic translation initiation factor 3 subunit L</fullName>
        <shortName evidence="1">eIF3l</shortName>
    </recommendedName>
</protein>
<accession>A6S1A3</accession>
<accession>A0A384JBH8</accession>
<comment type="function">
    <text evidence="1">Component of the eukaryotic translation initiation factor 3 (eIF-3) complex, which is involved in protein synthesis of a specialized repertoire of mRNAs and, together with other initiation factors, stimulates binding of mRNA and methionyl-tRNAi to the 40S ribosome. The eIF-3 complex specifically targets and initiates translation of a subset of mRNAs involved in cell proliferation.</text>
</comment>
<comment type="subunit">
    <text evidence="1">Component of the eukaryotic translation initiation factor 3 (eIF-3) complex.</text>
</comment>
<comment type="subcellular location">
    <subcellularLocation>
        <location evidence="1">Cytoplasm</location>
    </subcellularLocation>
</comment>
<comment type="similarity">
    <text evidence="1">Belongs to the eIF-3 subunit L family.</text>
</comment>
<organism>
    <name type="scientific">Botryotinia fuckeliana (strain B05.10)</name>
    <name type="common">Noble rot fungus</name>
    <name type="synonym">Botrytis cinerea</name>
    <dbReference type="NCBI Taxonomy" id="332648"/>
    <lineage>
        <taxon>Eukaryota</taxon>
        <taxon>Fungi</taxon>
        <taxon>Dikarya</taxon>
        <taxon>Ascomycota</taxon>
        <taxon>Pezizomycotina</taxon>
        <taxon>Leotiomycetes</taxon>
        <taxon>Helotiales</taxon>
        <taxon>Sclerotiniaceae</taxon>
        <taxon>Botrytis</taxon>
    </lineage>
</organism>
<sequence length="475" mass="54853">MSAFQNGGIASRALDDDSDIEEEALANDYKEQVQYEGMEELEQVNSMSMAQQTDDIQSRLAAAAQPLDFSAPLEVKFASYDNYCSLFHFILNSDGPVDLEPPSYYWAWDVIDEFIYQFNSFCSYRNRVARQGTNEEEIQILREAPNTWGCYSVLNVLYSLIQRSQINEQLAAMKRNEEPMAVAGDYGSKSLYRMLGYFSIIGLLRVHCLLGDFSLALKTLDDIELNKKAMFARVMAAHFTTYYYVGFSYMMMRRYADAIRMFSHILIYVSRTKNFQKNAQYDSISKKNDQMYALIAICVAFHPTRLDDTIHTALREKYGDQLLKLQRGGPESLPIFEELFRSACPKFISPTPPDFDNPELNVDPLEHHLSIFMDEVKTNMWSPTVKSYLRLYTTMDVKKLAGFLEVEPEKLRGWLLVNKQRSRQIRWTDNGLLDGEVVNSNDLDYAMQGDLIHISEAKVGRKLVDWYLRNLARTY</sequence>
<name>EIF3L_BOTFB</name>
<evidence type="ECO:0000255" key="1">
    <source>
        <dbReference type="HAMAP-Rule" id="MF_03011"/>
    </source>
</evidence>
<evidence type="ECO:0000255" key="2">
    <source>
        <dbReference type="PROSITE-ProRule" id="PRU01185"/>
    </source>
</evidence>
<gene>
    <name type="ORF">BC1G_06600</name>
    <name type="ORF">BCIN_03g02320</name>
</gene>
<keyword id="KW-0963">Cytoplasm</keyword>
<keyword id="KW-0396">Initiation factor</keyword>
<keyword id="KW-0648">Protein biosynthesis</keyword>
<keyword id="KW-1185">Reference proteome</keyword>
<reference key="1">
    <citation type="journal article" date="2011" name="PLoS Genet.">
        <title>Genomic analysis of the necrotrophic fungal pathogens Sclerotinia sclerotiorum and Botrytis cinerea.</title>
        <authorList>
            <person name="Amselem J."/>
            <person name="Cuomo C.A."/>
            <person name="van Kan J.A.L."/>
            <person name="Viaud M."/>
            <person name="Benito E.P."/>
            <person name="Couloux A."/>
            <person name="Coutinho P.M."/>
            <person name="de Vries R.P."/>
            <person name="Dyer P.S."/>
            <person name="Fillinger S."/>
            <person name="Fournier E."/>
            <person name="Gout L."/>
            <person name="Hahn M."/>
            <person name="Kohn L."/>
            <person name="Lapalu N."/>
            <person name="Plummer K.M."/>
            <person name="Pradier J.-M."/>
            <person name="Quevillon E."/>
            <person name="Sharon A."/>
            <person name="Simon A."/>
            <person name="ten Have A."/>
            <person name="Tudzynski B."/>
            <person name="Tudzynski P."/>
            <person name="Wincker P."/>
            <person name="Andrew M."/>
            <person name="Anthouard V."/>
            <person name="Beever R.E."/>
            <person name="Beffa R."/>
            <person name="Benoit I."/>
            <person name="Bouzid O."/>
            <person name="Brault B."/>
            <person name="Chen Z."/>
            <person name="Choquer M."/>
            <person name="Collemare J."/>
            <person name="Cotton P."/>
            <person name="Danchin E.G."/>
            <person name="Da Silva C."/>
            <person name="Gautier A."/>
            <person name="Giraud C."/>
            <person name="Giraud T."/>
            <person name="Gonzalez C."/>
            <person name="Grossetete S."/>
            <person name="Gueldener U."/>
            <person name="Henrissat B."/>
            <person name="Howlett B.J."/>
            <person name="Kodira C."/>
            <person name="Kretschmer M."/>
            <person name="Lappartient A."/>
            <person name="Leroch M."/>
            <person name="Levis C."/>
            <person name="Mauceli E."/>
            <person name="Neuveglise C."/>
            <person name="Oeser B."/>
            <person name="Pearson M."/>
            <person name="Poulain J."/>
            <person name="Poussereau N."/>
            <person name="Quesneville H."/>
            <person name="Rascle C."/>
            <person name="Schumacher J."/>
            <person name="Segurens B."/>
            <person name="Sexton A."/>
            <person name="Silva E."/>
            <person name="Sirven C."/>
            <person name="Soanes D.M."/>
            <person name="Talbot N.J."/>
            <person name="Templeton M."/>
            <person name="Yandava C."/>
            <person name="Yarden O."/>
            <person name="Zeng Q."/>
            <person name="Rollins J.A."/>
            <person name="Lebrun M.-H."/>
            <person name="Dickman M."/>
        </authorList>
    </citation>
    <scope>NUCLEOTIDE SEQUENCE [LARGE SCALE GENOMIC DNA]</scope>
    <source>
        <strain>B05.10</strain>
    </source>
</reference>
<reference key="2">
    <citation type="journal article" date="2012" name="Eukaryot. Cell">
        <title>Genome update of Botrytis cinerea strains B05.10 and T4.</title>
        <authorList>
            <person name="Staats M."/>
            <person name="van Kan J.A.L."/>
        </authorList>
    </citation>
    <scope>NUCLEOTIDE SEQUENCE [LARGE SCALE GENOMIC DNA]</scope>
    <scope>GENOME REANNOTATION</scope>
    <source>
        <strain>B05.10</strain>
    </source>
</reference>
<reference key="3">
    <citation type="journal article" date="2017" name="Mol. Plant Pathol.">
        <title>A gapless genome sequence of the fungus Botrytis cinerea.</title>
        <authorList>
            <person name="van Kan J.A.L."/>
            <person name="Stassen J.H.M."/>
            <person name="Mosbach A."/>
            <person name="van der Lee T.A.J."/>
            <person name="Faino L."/>
            <person name="Farmer A.D."/>
            <person name="Papasotiriou D.G."/>
            <person name="Zhou S."/>
            <person name="Seidl M.F."/>
            <person name="Cottam E."/>
            <person name="Edel D."/>
            <person name="Hahn M."/>
            <person name="Schwartz D.C."/>
            <person name="Dietrich R.A."/>
            <person name="Widdison S."/>
            <person name="Scalliet G."/>
        </authorList>
    </citation>
    <scope>NUCLEOTIDE SEQUENCE [LARGE SCALE GENOMIC DNA]</scope>
    <scope>GENOME REANNOTATION</scope>
    <source>
        <strain>B05.10</strain>
    </source>
</reference>
<feature type="chain" id="PRO_0000364261" description="Eukaryotic translation initiation factor 3 subunit L">
    <location>
        <begin position="1"/>
        <end position="475"/>
    </location>
</feature>
<feature type="domain" description="PCI" evidence="2">
    <location>
        <begin position="257"/>
        <end position="451"/>
    </location>
</feature>
<proteinExistence type="inferred from homology"/>
<dbReference type="EMBL" id="CP009807">
    <property type="protein sequence ID" value="ATZ47959.1"/>
    <property type="molecule type" value="Genomic_DNA"/>
</dbReference>
<dbReference type="RefSeq" id="XP_001555077.1">
    <property type="nucleotide sequence ID" value="XM_001555027.1"/>
</dbReference>
<dbReference type="SMR" id="A6S1A3"/>
<dbReference type="EnsemblFungi" id="Bcin03g02320.1">
    <property type="protein sequence ID" value="Bcin03p02320.1"/>
    <property type="gene ID" value="Bcin03g02320"/>
</dbReference>
<dbReference type="GeneID" id="5435640"/>
<dbReference type="KEGG" id="bfu:BCIN_03g02320"/>
<dbReference type="VEuPathDB" id="FungiDB:Bcin03g02320"/>
<dbReference type="OrthoDB" id="15082at2759"/>
<dbReference type="Proteomes" id="UP000001798">
    <property type="component" value="Chromosome bcin03"/>
</dbReference>
<dbReference type="GO" id="GO:0016282">
    <property type="term" value="C:eukaryotic 43S preinitiation complex"/>
    <property type="evidence" value="ECO:0007669"/>
    <property type="project" value="UniProtKB-UniRule"/>
</dbReference>
<dbReference type="GO" id="GO:0033290">
    <property type="term" value="C:eukaryotic 48S preinitiation complex"/>
    <property type="evidence" value="ECO:0007669"/>
    <property type="project" value="UniProtKB-UniRule"/>
</dbReference>
<dbReference type="GO" id="GO:0005852">
    <property type="term" value="C:eukaryotic translation initiation factor 3 complex"/>
    <property type="evidence" value="ECO:0007669"/>
    <property type="project" value="UniProtKB-UniRule"/>
</dbReference>
<dbReference type="GO" id="GO:0003743">
    <property type="term" value="F:translation initiation factor activity"/>
    <property type="evidence" value="ECO:0007669"/>
    <property type="project" value="UniProtKB-UniRule"/>
</dbReference>
<dbReference type="GO" id="GO:0001732">
    <property type="term" value="P:formation of cytoplasmic translation initiation complex"/>
    <property type="evidence" value="ECO:0007669"/>
    <property type="project" value="UniProtKB-UniRule"/>
</dbReference>
<dbReference type="HAMAP" id="MF_03011">
    <property type="entry name" value="eIF3l"/>
    <property type="match status" value="1"/>
</dbReference>
<dbReference type="InterPro" id="IPR019382">
    <property type="entry name" value="eIF3l"/>
</dbReference>
<dbReference type="InterPro" id="IPR000717">
    <property type="entry name" value="PCI_dom"/>
</dbReference>
<dbReference type="PANTHER" id="PTHR13242">
    <property type="entry name" value="EUKARYOTIC TRANSLATION INITIATION FACTOR 3"/>
    <property type="match status" value="1"/>
</dbReference>
<dbReference type="PANTHER" id="PTHR13242:SF0">
    <property type="entry name" value="EUKARYOTIC TRANSLATION INITIATION FACTOR 3 SUBUNIT L"/>
    <property type="match status" value="1"/>
</dbReference>
<dbReference type="Pfam" id="PF10255">
    <property type="entry name" value="Paf67"/>
    <property type="match status" value="1"/>
</dbReference>
<dbReference type="PROSITE" id="PS50250">
    <property type="entry name" value="PCI"/>
    <property type="match status" value="1"/>
</dbReference>